<dbReference type="EMBL" id="AK003111">
    <property type="protein sequence ID" value="BAB22573.1"/>
    <property type="molecule type" value="mRNA"/>
</dbReference>
<dbReference type="EMBL" id="AK003765">
    <property type="protein sequence ID" value="BAB22983.1"/>
    <property type="molecule type" value="mRNA"/>
</dbReference>
<dbReference type="EMBL" id="AK007512">
    <property type="protein sequence ID" value="BAB25081.1"/>
    <property type="molecule type" value="mRNA"/>
</dbReference>
<dbReference type="EMBL" id="AK009050">
    <property type="protein sequence ID" value="BAB26047.1"/>
    <property type="molecule type" value="mRNA"/>
</dbReference>
<dbReference type="EMBL" id="BC028499">
    <property type="protein sequence ID" value="AAH28499.1"/>
    <property type="molecule type" value="mRNA"/>
</dbReference>
<dbReference type="EMBL" id="BC096576">
    <property type="protein sequence ID" value="AAH96576.1"/>
    <property type="molecule type" value="mRNA"/>
</dbReference>
<dbReference type="CCDS" id="CCDS36767.1"/>
<dbReference type="RefSeq" id="NP_079645.1">
    <property type="nucleotide sequence ID" value="NM_025369.3"/>
</dbReference>
<dbReference type="SMR" id="Q9CQX8"/>
<dbReference type="BioGRID" id="211236">
    <property type="interactions" value="26"/>
</dbReference>
<dbReference type="FunCoup" id="Q9CQX8">
    <property type="interactions" value="810"/>
</dbReference>
<dbReference type="IntAct" id="Q9CQX8">
    <property type="interactions" value="1"/>
</dbReference>
<dbReference type="STRING" id="10090.ENSMUSP00000104957"/>
<dbReference type="GlyGen" id="Q9CQX8">
    <property type="glycosylation" value="1 site, 1 O-linked glycan (1 site)"/>
</dbReference>
<dbReference type="iPTMnet" id="Q9CQX8"/>
<dbReference type="PhosphoSitePlus" id="Q9CQX8"/>
<dbReference type="SwissPalm" id="Q9CQX8"/>
<dbReference type="jPOST" id="Q9CQX8"/>
<dbReference type="PaxDb" id="10090-ENSMUSP00000104957"/>
<dbReference type="PeptideAtlas" id="Q9CQX8"/>
<dbReference type="ProteomicsDB" id="257050"/>
<dbReference type="Pumba" id="Q9CQX8"/>
<dbReference type="Antibodypedia" id="23923">
    <property type="antibodies" value="183 antibodies from 28 providers"/>
</dbReference>
<dbReference type="DNASU" id="66128"/>
<dbReference type="Ensembl" id="ENSMUST00000109333.8">
    <property type="protein sequence ID" value="ENSMUSP00000104957.2"/>
    <property type="gene ID" value="ENSMUSG00000061474.12"/>
</dbReference>
<dbReference type="GeneID" id="66128"/>
<dbReference type="KEGG" id="mmu:66128"/>
<dbReference type="UCSC" id="uc007rrl.2">
    <property type="organism name" value="mouse"/>
</dbReference>
<dbReference type="AGR" id="MGI:1913378"/>
<dbReference type="CTD" id="66128"/>
<dbReference type="MGI" id="MGI:1913378">
    <property type="gene designation" value="Mrps36"/>
</dbReference>
<dbReference type="VEuPathDB" id="HostDB:ENSMUSG00000061474"/>
<dbReference type="eggNOG" id="ENOG502S7A7">
    <property type="taxonomic scope" value="Eukaryota"/>
</dbReference>
<dbReference type="GeneTree" id="ENSGT00390000017443"/>
<dbReference type="InParanoid" id="Q9CQX8"/>
<dbReference type="OMA" id="MSQHSKG"/>
<dbReference type="OrthoDB" id="2116030at2759"/>
<dbReference type="PhylomeDB" id="Q9CQX8"/>
<dbReference type="TreeFam" id="TF333436"/>
<dbReference type="Reactome" id="R-MMU-5389840">
    <property type="pathway name" value="Mitochondrial translation elongation"/>
</dbReference>
<dbReference type="Reactome" id="R-MMU-5419276">
    <property type="pathway name" value="Mitochondrial translation termination"/>
</dbReference>
<dbReference type="Reactome" id="R-MMU-6783984">
    <property type="pathway name" value="Glycine degradation"/>
</dbReference>
<dbReference type="Reactome" id="R-MMU-9853506">
    <property type="pathway name" value="OGDH complex synthesizes succinyl-CoA from 2-OG"/>
</dbReference>
<dbReference type="BioGRID-ORCS" id="66128">
    <property type="hits" value="6 hits in 56 CRISPR screens"/>
</dbReference>
<dbReference type="CD-CODE" id="CE726F99">
    <property type="entry name" value="Postsynaptic density"/>
</dbReference>
<dbReference type="ChiTaRS" id="Mrps36">
    <property type="organism name" value="mouse"/>
</dbReference>
<dbReference type="PRO" id="PR:Q9CQX8"/>
<dbReference type="Proteomes" id="UP000000589">
    <property type="component" value="Chromosome 13"/>
</dbReference>
<dbReference type="RNAct" id="Q9CQX8">
    <property type="molecule type" value="protein"/>
</dbReference>
<dbReference type="Bgee" id="ENSMUSG00000061474">
    <property type="expression patterns" value="Expressed in primary oocyte and 65 other cell types or tissues"/>
</dbReference>
<dbReference type="ExpressionAtlas" id="Q9CQX8">
    <property type="expression patterns" value="baseline and differential"/>
</dbReference>
<dbReference type="GO" id="GO:0005739">
    <property type="term" value="C:mitochondrion"/>
    <property type="evidence" value="ECO:0000314"/>
    <property type="project" value="UniProtKB"/>
</dbReference>
<dbReference type="GO" id="GO:0045252">
    <property type="term" value="C:oxoglutarate dehydrogenase complex"/>
    <property type="evidence" value="ECO:0000314"/>
    <property type="project" value="UniProtKB"/>
</dbReference>
<dbReference type="GO" id="GO:0030674">
    <property type="term" value="F:protein-macromolecule adaptor activity"/>
    <property type="evidence" value="ECO:0000314"/>
    <property type="project" value="FlyBase"/>
</dbReference>
<dbReference type="GO" id="GO:0006103">
    <property type="term" value="P:2-oxoglutarate metabolic process"/>
    <property type="evidence" value="ECO:0000315"/>
    <property type="project" value="UniProtKB"/>
</dbReference>
<dbReference type="GO" id="GO:0006099">
    <property type="term" value="P:tricarboxylic acid cycle"/>
    <property type="evidence" value="ECO:0000315"/>
    <property type="project" value="UniProtKB"/>
</dbReference>
<dbReference type="InterPro" id="IPR020373">
    <property type="entry name" value="Kgd4/YMR-31"/>
</dbReference>
<dbReference type="PANTHER" id="PTHR31601">
    <property type="entry name" value="28S RIBOSOMAL PROTEIN S36, MITOCHONDRIAL"/>
    <property type="match status" value="1"/>
</dbReference>
<dbReference type="PANTHER" id="PTHR31601:SF2">
    <property type="entry name" value="ALPHA-KETOGLUTARATE DEHYDROGENASE COMPONENT 4"/>
    <property type="match status" value="1"/>
</dbReference>
<dbReference type="Pfam" id="PF10937">
    <property type="entry name" value="Kgd4-YMR31"/>
    <property type="match status" value="1"/>
</dbReference>
<comment type="function">
    <text evidence="5 9">Molecular adapter that is necessary to form a stable 2-oxoglutarate dehydrogenase enzyme complex (OGDHC). Enables the specific recruitment of E3 subunit to E2 subunit in the 2-oxoglutarate dehydrogenase complex (OGDHC).</text>
</comment>
<comment type="subunit">
    <text evidence="5 9">Component of the 2-oxoglutarate dehydrogenase complex (OGDHC), composed of OGDH (2-oxoglutarate dehydrogenase; also called E1 subunit), DLST (dihydrolipoamide succinyltransferase; also called E2 subunit) and DLD (dihydrolipoamide dehydrogenase; also called E3 subunit), and the assembly factor KGD4. Within OGDHC complex, interacts (via N-terminus) with E3 subunit and (via C-terminus) with E2 subunit.</text>
</comment>
<comment type="subcellular location">
    <subcellularLocation>
        <location evidence="5 9">Mitochondrion</location>
    </subcellularLocation>
</comment>
<comment type="similarity">
    <text evidence="8">Belongs to the alpha-ketoglutarate dehydrogenase component 4 family.</text>
</comment>
<comment type="caution">
    <text evidence="1 2 4">Was originally identified in the small subunit (28S) of mitochondrial ribosomes that were purified on sucrose gradients (By similarity). This observation has been challenged by experiments showing KGD4 copurification with the oxoglutarate dehydrogenase complex (OGDHC), also called alpha-ketoglutarate dehydrogenase complex (KGDH). Both mitochondrial ribosome 28S subunit and OGDC have a similar size and OGDC is highly abundant, therefore OGDC has been found to contaminate ribosomal preparations performed by sequential centrifugation steps (PubMed:25165143). In addition, KGD4 could not be located in the structure of the human mitochondrial ribosome, supporting the hypothesis that it is not a mitoribosomal protein (By similarity).</text>
</comment>
<accession>Q9CQX8</accession>
<accession>Q4VA25</accession>
<sequence length="102" mass="11101">MGSKMASATRVVQVVKPHAPLIKFPNRRDKPKLSASEALGSAALPSHSSAISQHSKGSTSPDLLMHQGPPDTAEIIKSLPQKYRRKPMSQEEMEFIQRGGPE</sequence>
<reference key="1">
    <citation type="journal article" date="2005" name="Science">
        <title>The transcriptional landscape of the mammalian genome.</title>
        <authorList>
            <person name="Carninci P."/>
            <person name="Kasukawa T."/>
            <person name="Katayama S."/>
            <person name="Gough J."/>
            <person name="Frith M.C."/>
            <person name="Maeda N."/>
            <person name="Oyama R."/>
            <person name="Ravasi T."/>
            <person name="Lenhard B."/>
            <person name="Wells C."/>
            <person name="Kodzius R."/>
            <person name="Shimokawa K."/>
            <person name="Bajic V.B."/>
            <person name="Brenner S.E."/>
            <person name="Batalov S."/>
            <person name="Forrest A.R."/>
            <person name="Zavolan M."/>
            <person name="Davis M.J."/>
            <person name="Wilming L.G."/>
            <person name="Aidinis V."/>
            <person name="Allen J.E."/>
            <person name="Ambesi-Impiombato A."/>
            <person name="Apweiler R."/>
            <person name="Aturaliya R.N."/>
            <person name="Bailey T.L."/>
            <person name="Bansal M."/>
            <person name="Baxter L."/>
            <person name="Beisel K.W."/>
            <person name="Bersano T."/>
            <person name="Bono H."/>
            <person name="Chalk A.M."/>
            <person name="Chiu K.P."/>
            <person name="Choudhary V."/>
            <person name="Christoffels A."/>
            <person name="Clutterbuck D.R."/>
            <person name="Crowe M.L."/>
            <person name="Dalla E."/>
            <person name="Dalrymple B.P."/>
            <person name="de Bono B."/>
            <person name="Della Gatta G."/>
            <person name="di Bernardo D."/>
            <person name="Down T."/>
            <person name="Engstrom P."/>
            <person name="Fagiolini M."/>
            <person name="Faulkner G."/>
            <person name="Fletcher C.F."/>
            <person name="Fukushima T."/>
            <person name="Furuno M."/>
            <person name="Futaki S."/>
            <person name="Gariboldi M."/>
            <person name="Georgii-Hemming P."/>
            <person name="Gingeras T.R."/>
            <person name="Gojobori T."/>
            <person name="Green R.E."/>
            <person name="Gustincich S."/>
            <person name="Harbers M."/>
            <person name="Hayashi Y."/>
            <person name="Hensch T.K."/>
            <person name="Hirokawa N."/>
            <person name="Hill D."/>
            <person name="Huminiecki L."/>
            <person name="Iacono M."/>
            <person name="Ikeo K."/>
            <person name="Iwama A."/>
            <person name="Ishikawa T."/>
            <person name="Jakt M."/>
            <person name="Kanapin A."/>
            <person name="Katoh M."/>
            <person name="Kawasawa Y."/>
            <person name="Kelso J."/>
            <person name="Kitamura H."/>
            <person name="Kitano H."/>
            <person name="Kollias G."/>
            <person name="Krishnan S.P."/>
            <person name="Kruger A."/>
            <person name="Kummerfeld S.K."/>
            <person name="Kurochkin I.V."/>
            <person name="Lareau L.F."/>
            <person name="Lazarevic D."/>
            <person name="Lipovich L."/>
            <person name="Liu J."/>
            <person name="Liuni S."/>
            <person name="McWilliam S."/>
            <person name="Madan Babu M."/>
            <person name="Madera M."/>
            <person name="Marchionni L."/>
            <person name="Matsuda H."/>
            <person name="Matsuzawa S."/>
            <person name="Miki H."/>
            <person name="Mignone F."/>
            <person name="Miyake S."/>
            <person name="Morris K."/>
            <person name="Mottagui-Tabar S."/>
            <person name="Mulder N."/>
            <person name="Nakano N."/>
            <person name="Nakauchi H."/>
            <person name="Ng P."/>
            <person name="Nilsson R."/>
            <person name="Nishiguchi S."/>
            <person name="Nishikawa S."/>
            <person name="Nori F."/>
            <person name="Ohara O."/>
            <person name="Okazaki Y."/>
            <person name="Orlando V."/>
            <person name="Pang K.C."/>
            <person name="Pavan W.J."/>
            <person name="Pavesi G."/>
            <person name="Pesole G."/>
            <person name="Petrovsky N."/>
            <person name="Piazza S."/>
            <person name="Reed J."/>
            <person name="Reid J.F."/>
            <person name="Ring B.Z."/>
            <person name="Ringwald M."/>
            <person name="Rost B."/>
            <person name="Ruan Y."/>
            <person name="Salzberg S.L."/>
            <person name="Sandelin A."/>
            <person name="Schneider C."/>
            <person name="Schoenbach C."/>
            <person name="Sekiguchi K."/>
            <person name="Semple C.A."/>
            <person name="Seno S."/>
            <person name="Sessa L."/>
            <person name="Sheng Y."/>
            <person name="Shibata Y."/>
            <person name="Shimada H."/>
            <person name="Shimada K."/>
            <person name="Silva D."/>
            <person name="Sinclair B."/>
            <person name="Sperling S."/>
            <person name="Stupka E."/>
            <person name="Sugiura K."/>
            <person name="Sultana R."/>
            <person name="Takenaka Y."/>
            <person name="Taki K."/>
            <person name="Tammoja K."/>
            <person name="Tan S.L."/>
            <person name="Tang S."/>
            <person name="Taylor M.S."/>
            <person name="Tegner J."/>
            <person name="Teichmann S.A."/>
            <person name="Ueda H.R."/>
            <person name="van Nimwegen E."/>
            <person name="Verardo R."/>
            <person name="Wei C.L."/>
            <person name="Yagi K."/>
            <person name="Yamanishi H."/>
            <person name="Zabarovsky E."/>
            <person name="Zhu S."/>
            <person name="Zimmer A."/>
            <person name="Hide W."/>
            <person name="Bult C."/>
            <person name="Grimmond S.M."/>
            <person name="Teasdale R.D."/>
            <person name="Liu E.T."/>
            <person name="Brusic V."/>
            <person name="Quackenbush J."/>
            <person name="Wahlestedt C."/>
            <person name="Mattick J.S."/>
            <person name="Hume D.A."/>
            <person name="Kai C."/>
            <person name="Sasaki D."/>
            <person name="Tomaru Y."/>
            <person name="Fukuda S."/>
            <person name="Kanamori-Katayama M."/>
            <person name="Suzuki M."/>
            <person name="Aoki J."/>
            <person name="Arakawa T."/>
            <person name="Iida J."/>
            <person name="Imamura K."/>
            <person name="Itoh M."/>
            <person name="Kato T."/>
            <person name="Kawaji H."/>
            <person name="Kawagashira N."/>
            <person name="Kawashima T."/>
            <person name="Kojima M."/>
            <person name="Kondo S."/>
            <person name="Konno H."/>
            <person name="Nakano K."/>
            <person name="Ninomiya N."/>
            <person name="Nishio T."/>
            <person name="Okada M."/>
            <person name="Plessy C."/>
            <person name="Shibata K."/>
            <person name="Shiraki T."/>
            <person name="Suzuki S."/>
            <person name="Tagami M."/>
            <person name="Waki K."/>
            <person name="Watahiki A."/>
            <person name="Okamura-Oho Y."/>
            <person name="Suzuki H."/>
            <person name="Kawai J."/>
            <person name="Hayashizaki Y."/>
        </authorList>
    </citation>
    <scope>NUCLEOTIDE SEQUENCE [LARGE SCALE MRNA]</scope>
    <source>
        <strain>C57BL/6J</strain>
        <tissue>Embryo</tissue>
        <tissue>Heart</tissue>
        <tissue>Pancreas</tissue>
        <tissue>Tongue</tissue>
    </source>
</reference>
<reference key="2">
    <citation type="journal article" date="2004" name="Genome Res.">
        <title>The status, quality, and expansion of the NIH full-length cDNA project: the Mammalian Gene Collection (MGC).</title>
        <authorList>
            <consortium name="The MGC Project Team"/>
        </authorList>
    </citation>
    <scope>NUCLEOTIDE SEQUENCE [LARGE SCALE MRNA]</scope>
    <source>
        <tissue>Mammary gland</tissue>
    </source>
</reference>
<reference key="3">
    <citation type="journal article" date="2007" name="Proc. Natl. Acad. Sci. U.S.A.">
        <title>Large-scale phosphorylation analysis of mouse liver.</title>
        <authorList>
            <person name="Villen J."/>
            <person name="Beausoleil S.A."/>
            <person name="Gerber S.A."/>
            <person name="Gygi S.P."/>
        </authorList>
    </citation>
    <scope>IDENTIFICATION BY MASS SPECTROMETRY [LARGE SCALE ANALYSIS]</scope>
    <source>
        <tissue>Liver</tissue>
    </source>
</reference>
<reference key="4">
    <citation type="journal article" date="2010" name="Cell">
        <title>A tissue-specific atlas of mouse protein phosphorylation and expression.</title>
        <authorList>
            <person name="Huttlin E.L."/>
            <person name="Jedrychowski M.P."/>
            <person name="Elias J.E."/>
            <person name="Goswami T."/>
            <person name="Rad R."/>
            <person name="Beausoleil S.A."/>
            <person name="Villen J."/>
            <person name="Haas W."/>
            <person name="Sowa M.E."/>
            <person name="Gygi S.P."/>
        </authorList>
    </citation>
    <scope>PHOSPHORYLATION [LARGE SCALE ANALYSIS] AT SER-89</scope>
    <scope>IDENTIFICATION BY MASS SPECTROMETRY [LARGE SCALE ANALYSIS]</scope>
    <source>
        <tissue>Brain</tissue>
        <tissue>Brown adipose tissue</tissue>
        <tissue>Heart</tissue>
        <tissue>Kidney</tissue>
        <tissue>Liver</tissue>
        <tissue>Lung</tissue>
        <tissue>Pancreas</tissue>
        <tissue>Spleen</tissue>
        <tissue>Testis</tissue>
    </source>
</reference>
<reference key="5">
    <citation type="journal article" date="2013" name="Mol. Cell">
        <title>SIRT5-mediated lysine desuccinylation impacts diverse metabolic pathways.</title>
        <authorList>
            <person name="Park J."/>
            <person name="Chen Y."/>
            <person name="Tishkoff D.X."/>
            <person name="Peng C."/>
            <person name="Tan M."/>
            <person name="Dai L."/>
            <person name="Xie Z."/>
            <person name="Zhang Y."/>
            <person name="Zwaans B.M."/>
            <person name="Skinner M.E."/>
            <person name="Lombard D.B."/>
            <person name="Zhao Y."/>
        </authorList>
    </citation>
    <scope>ACETYLATION [LARGE SCALE ANALYSIS] AT GLY-2</scope>
    <scope>SUCCINYLATION [LARGE SCALE ANALYSIS] AT LYS-4</scope>
    <scope>CLEAVAGE OF INITIATOR METHIONINE [LARGE SCALE ANALYSIS]</scope>
    <scope>IDENTIFICATION BY MASS SPECTROMETRY [LARGE SCALE ANALYSIS]</scope>
    <source>
        <tissue>Embryonic fibroblast</tissue>
        <tissue>Liver</tissue>
    </source>
</reference>
<reference key="6">
    <citation type="journal article" date="2014" name="Mol. Biol. Cell">
        <title>The novel component Kgd4 recruits the E3 subunit to the mitochondrial alpha-ketoglutarate dehydrogenase.</title>
        <authorList>
            <person name="Heublein M."/>
            <person name="Burguillos M.A."/>
            <person name="Voegtle F.N."/>
            <person name="Teixeira P.F."/>
            <person name="Imhof A."/>
            <person name="Meisinger C."/>
            <person name="Ott M."/>
        </authorList>
    </citation>
    <scope>FUNCTION</scope>
    <scope>IDENTIFICATION IN OGDC</scope>
    <scope>SUBCELLULAR LOCATION</scope>
</reference>
<reference key="7">
    <citation type="journal article" date="2023" name="Open Biol.">
        <title>MRPS36 provides a structural link in the eukaryotic 2-oxoglutarate dehydrogenase complex.</title>
        <authorList>
            <person name="Hevler J.F."/>
            <person name="Albanese P."/>
            <person name="Cabrera-Orefice A."/>
            <person name="Potter A."/>
            <person name="Jankevics A."/>
            <person name="Misic J."/>
            <person name="Scheltema R.A."/>
            <person name="Brandt U."/>
            <person name="Arnold S."/>
            <person name="Heck A.J.R."/>
        </authorList>
    </citation>
    <scope>SUBCELLULAR LOCATION</scope>
    <scope>SUBUNIT</scope>
    <scope>FUNCTION</scope>
</reference>
<proteinExistence type="evidence at protein level"/>
<protein>
    <recommendedName>
        <fullName evidence="6">Alpha-ketoglutarate dehydrogenase component 4</fullName>
    </recommendedName>
    <alternativeName>
        <fullName evidence="2">Alpha-ketoglutarate dehydrogenase subunit 4</fullName>
    </alternativeName>
</protein>
<gene>
    <name evidence="6" type="primary">Kgd4</name>
    <name evidence="7" type="synonym">Mrps36</name>
</gene>
<evidence type="ECO:0000250" key="1">
    <source>
        <dbReference type="UniProtKB" id="P82908"/>
    </source>
</evidence>
<evidence type="ECO:0000250" key="2">
    <source>
        <dbReference type="UniProtKB" id="P82909"/>
    </source>
</evidence>
<evidence type="ECO:0000256" key="3">
    <source>
        <dbReference type="SAM" id="MobiDB-lite"/>
    </source>
</evidence>
<evidence type="ECO:0000269" key="4">
    <source>
    </source>
</evidence>
<evidence type="ECO:0000269" key="5">
    <source>
    </source>
</evidence>
<evidence type="ECO:0000303" key="6">
    <source>
    </source>
</evidence>
<evidence type="ECO:0000303" key="7">
    <source>
    </source>
</evidence>
<evidence type="ECO:0000305" key="8"/>
<evidence type="ECO:0000305" key="9">
    <source>
    </source>
</evidence>
<evidence type="ECO:0007744" key="10">
    <source>
    </source>
</evidence>
<evidence type="ECO:0007744" key="11">
    <source>
    </source>
</evidence>
<feature type="initiator methionine" description="Removed" evidence="11">
    <location>
        <position position="1"/>
    </location>
</feature>
<feature type="chain" id="PRO_0000087734" description="Alpha-ketoglutarate dehydrogenase component 4">
    <location>
        <begin position="2"/>
        <end position="102"/>
    </location>
</feature>
<feature type="region of interest" description="Disordered" evidence="3">
    <location>
        <begin position="23"/>
        <end position="70"/>
    </location>
</feature>
<feature type="compositionally biased region" description="Low complexity" evidence="3">
    <location>
        <begin position="33"/>
        <end position="46"/>
    </location>
</feature>
<feature type="compositionally biased region" description="Polar residues" evidence="3">
    <location>
        <begin position="47"/>
        <end position="61"/>
    </location>
</feature>
<feature type="modified residue" description="N-acetylglycine" evidence="11">
    <location>
        <position position="2"/>
    </location>
</feature>
<feature type="modified residue" description="N6-succinyllysine" evidence="11">
    <location>
        <position position="4"/>
    </location>
</feature>
<feature type="modified residue" description="Phosphoserine" evidence="2">
    <location>
        <position position="48"/>
    </location>
</feature>
<feature type="modified residue" description="Phosphoserine" evidence="2">
    <location>
        <position position="60"/>
    </location>
</feature>
<feature type="modified residue" description="Phosphoserine" evidence="10">
    <location>
        <position position="89"/>
    </location>
</feature>
<name>KGD4_MOUSE</name>
<keyword id="KW-0007">Acetylation</keyword>
<keyword id="KW-0496">Mitochondrion</keyword>
<keyword id="KW-0597">Phosphoprotein</keyword>
<keyword id="KW-1185">Reference proteome</keyword>
<keyword id="KW-0816">Tricarboxylic acid cycle</keyword>
<organism>
    <name type="scientific">Mus musculus</name>
    <name type="common">Mouse</name>
    <dbReference type="NCBI Taxonomy" id="10090"/>
    <lineage>
        <taxon>Eukaryota</taxon>
        <taxon>Metazoa</taxon>
        <taxon>Chordata</taxon>
        <taxon>Craniata</taxon>
        <taxon>Vertebrata</taxon>
        <taxon>Euteleostomi</taxon>
        <taxon>Mammalia</taxon>
        <taxon>Eutheria</taxon>
        <taxon>Euarchontoglires</taxon>
        <taxon>Glires</taxon>
        <taxon>Rodentia</taxon>
        <taxon>Myomorpha</taxon>
        <taxon>Muroidea</taxon>
        <taxon>Muridae</taxon>
        <taxon>Murinae</taxon>
        <taxon>Mus</taxon>
        <taxon>Mus</taxon>
    </lineage>
</organism>